<sequence>MTDHIRPLIAGNWKMNGLKASTAEFEAMLAGAAEVTGKADLLVCPPATLLAGFADKARGTRAVAVGAQDCHAKASGAHTGDLSAEMLADAGASAIIVGHSERRADHGESDVVVHQKTEAVWRAGLVAIVCVGETQQQRDAGQTLDILRGQLNLSLPQGSTAANLTVAYEPVWAIGTGLTPTAKDVEQIHAFIRTLLIERFNGEGARMRILYGGSVKPSNAAELMAVANVNGALVGGASLKAADFLAIAKGC</sequence>
<keyword id="KW-0963">Cytoplasm</keyword>
<keyword id="KW-0312">Gluconeogenesis</keyword>
<keyword id="KW-0324">Glycolysis</keyword>
<keyword id="KW-0413">Isomerase</keyword>
<keyword id="KW-1185">Reference proteome</keyword>
<comment type="function">
    <text evidence="1">Involved in the gluconeogenesis. Catalyzes stereospecifically the conversion of dihydroxyacetone phosphate (DHAP) to D-glyceraldehyde-3-phosphate (G3P).</text>
</comment>
<comment type="catalytic activity">
    <reaction evidence="1">
        <text>D-glyceraldehyde 3-phosphate = dihydroxyacetone phosphate</text>
        <dbReference type="Rhea" id="RHEA:18585"/>
        <dbReference type="ChEBI" id="CHEBI:57642"/>
        <dbReference type="ChEBI" id="CHEBI:59776"/>
        <dbReference type="EC" id="5.3.1.1"/>
    </reaction>
</comment>
<comment type="pathway">
    <text evidence="1">Carbohydrate biosynthesis; gluconeogenesis.</text>
</comment>
<comment type="pathway">
    <text evidence="1">Carbohydrate degradation; glycolysis; D-glyceraldehyde 3-phosphate from glycerone phosphate: step 1/1.</text>
</comment>
<comment type="subunit">
    <text evidence="1">Homodimer.</text>
</comment>
<comment type="subcellular location">
    <subcellularLocation>
        <location evidence="1">Cytoplasm</location>
    </subcellularLocation>
</comment>
<comment type="similarity">
    <text evidence="1">Belongs to the triosephosphate isomerase family.</text>
</comment>
<reference key="1">
    <citation type="journal article" date="2007" name="Science">
        <title>Legumes symbioses: absence of nod genes in photosynthetic bradyrhizobia.</title>
        <authorList>
            <person name="Giraud E."/>
            <person name="Moulin L."/>
            <person name="Vallenet D."/>
            <person name="Barbe V."/>
            <person name="Cytryn E."/>
            <person name="Avarre J.-C."/>
            <person name="Jaubert M."/>
            <person name="Simon D."/>
            <person name="Cartieaux F."/>
            <person name="Prin Y."/>
            <person name="Bena G."/>
            <person name="Hannibal L."/>
            <person name="Fardoux J."/>
            <person name="Kojadinovic M."/>
            <person name="Vuillet L."/>
            <person name="Lajus A."/>
            <person name="Cruveiller S."/>
            <person name="Rouy Z."/>
            <person name="Mangenot S."/>
            <person name="Segurens B."/>
            <person name="Dossat C."/>
            <person name="Franck W.L."/>
            <person name="Chang W.-S."/>
            <person name="Saunders E."/>
            <person name="Bruce D."/>
            <person name="Richardson P."/>
            <person name="Normand P."/>
            <person name="Dreyfus B."/>
            <person name="Pignol D."/>
            <person name="Stacey G."/>
            <person name="Emerich D."/>
            <person name="Vermeglio A."/>
            <person name="Medigue C."/>
            <person name="Sadowsky M."/>
        </authorList>
    </citation>
    <scope>NUCLEOTIDE SEQUENCE [LARGE SCALE GENOMIC DNA]</scope>
    <source>
        <strain>BTAi1 / ATCC BAA-1182</strain>
    </source>
</reference>
<name>TPIS_BRASB</name>
<organism>
    <name type="scientific">Bradyrhizobium sp. (strain BTAi1 / ATCC BAA-1182)</name>
    <dbReference type="NCBI Taxonomy" id="288000"/>
    <lineage>
        <taxon>Bacteria</taxon>
        <taxon>Pseudomonadati</taxon>
        <taxon>Pseudomonadota</taxon>
        <taxon>Alphaproteobacteria</taxon>
        <taxon>Hyphomicrobiales</taxon>
        <taxon>Nitrobacteraceae</taxon>
        <taxon>Bradyrhizobium</taxon>
    </lineage>
</organism>
<feature type="chain" id="PRO_0000307440" description="Triosephosphate isomerase">
    <location>
        <begin position="1"/>
        <end position="251"/>
    </location>
</feature>
<feature type="active site" description="Electrophile" evidence="1">
    <location>
        <position position="99"/>
    </location>
</feature>
<feature type="active site" description="Proton acceptor" evidence="1">
    <location>
        <position position="169"/>
    </location>
</feature>
<feature type="binding site" evidence="1">
    <location>
        <begin position="12"/>
        <end position="14"/>
    </location>
    <ligand>
        <name>substrate</name>
    </ligand>
</feature>
<feature type="binding site" evidence="1">
    <location>
        <position position="175"/>
    </location>
    <ligand>
        <name>substrate</name>
    </ligand>
</feature>
<feature type="binding site" evidence="1">
    <location>
        <position position="214"/>
    </location>
    <ligand>
        <name>substrate</name>
    </ligand>
</feature>
<feature type="binding site" evidence="1">
    <location>
        <begin position="235"/>
        <end position="236"/>
    </location>
    <ligand>
        <name>substrate</name>
    </ligand>
</feature>
<dbReference type="EC" id="5.3.1.1" evidence="1"/>
<dbReference type="EMBL" id="CP000494">
    <property type="protein sequence ID" value="ABQ36516.1"/>
    <property type="molecule type" value="Genomic_DNA"/>
</dbReference>
<dbReference type="RefSeq" id="WP_012044512.1">
    <property type="nucleotide sequence ID" value="NC_009485.1"/>
</dbReference>
<dbReference type="SMR" id="A5EK22"/>
<dbReference type="STRING" id="288000.BBta_4480"/>
<dbReference type="KEGG" id="bbt:BBta_4480"/>
<dbReference type="eggNOG" id="COG0149">
    <property type="taxonomic scope" value="Bacteria"/>
</dbReference>
<dbReference type="HOGENOM" id="CLU_024251_2_1_5"/>
<dbReference type="OrthoDB" id="9809429at2"/>
<dbReference type="UniPathway" id="UPA00109">
    <property type="reaction ID" value="UER00189"/>
</dbReference>
<dbReference type="UniPathway" id="UPA00138"/>
<dbReference type="Proteomes" id="UP000000246">
    <property type="component" value="Chromosome"/>
</dbReference>
<dbReference type="GO" id="GO:0005829">
    <property type="term" value="C:cytosol"/>
    <property type="evidence" value="ECO:0007669"/>
    <property type="project" value="TreeGrafter"/>
</dbReference>
<dbReference type="GO" id="GO:0004807">
    <property type="term" value="F:triose-phosphate isomerase activity"/>
    <property type="evidence" value="ECO:0007669"/>
    <property type="project" value="UniProtKB-UniRule"/>
</dbReference>
<dbReference type="GO" id="GO:0006094">
    <property type="term" value="P:gluconeogenesis"/>
    <property type="evidence" value="ECO:0007669"/>
    <property type="project" value="UniProtKB-UniRule"/>
</dbReference>
<dbReference type="GO" id="GO:0046166">
    <property type="term" value="P:glyceraldehyde-3-phosphate biosynthetic process"/>
    <property type="evidence" value="ECO:0007669"/>
    <property type="project" value="TreeGrafter"/>
</dbReference>
<dbReference type="GO" id="GO:0019563">
    <property type="term" value="P:glycerol catabolic process"/>
    <property type="evidence" value="ECO:0007669"/>
    <property type="project" value="TreeGrafter"/>
</dbReference>
<dbReference type="GO" id="GO:0006096">
    <property type="term" value="P:glycolytic process"/>
    <property type="evidence" value="ECO:0007669"/>
    <property type="project" value="UniProtKB-UniRule"/>
</dbReference>
<dbReference type="CDD" id="cd00311">
    <property type="entry name" value="TIM"/>
    <property type="match status" value="1"/>
</dbReference>
<dbReference type="FunFam" id="3.20.20.70:FF:000016">
    <property type="entry name" value="Triosephosphate isomerase"/>
    <property type="match status" value="1"/>
</dbReference>
<dbReference type="Gene3D" id="3.20.20.70">
    <property type="entry name" value="Aldolase class I"/>
    <property type="match status" value="1"/>
</dbReference>
<dbReference type="HAMAP" id="MF_00147_B">
    <property type="entry name" value="TIM_B"/>
    <property type="match status" value="1"/>
</dbReference>
<dbReference type="InterPro" id="IPR013785">
    <property type="entry name" value="Aldolase_TIM"/>
</dbReference>
<dbReference type="InterPro" id="IPR035990">
    <property type="entry name" value="TIM_sf"/>
</dbReference>
<dbReference type="InterPro" id="IPR022896">
    <property type="entry name" value="TrioseP_Isoase_bac/euk"/>
</dbReference>
<dbReference type="InterPro" id="IPR000652">
    <property type="entry name" value="Triosephosphate_isomerase"/>
</dbReference>
<dbReference type="InterPro" id="IPR020861">
    <property type="entry name" value="Triosephosphate_isomerase_AS"/>
</dbReference>
<dbReference type="NCBIfam" id="TIGR00419">
    <property type="entry name" value="tim"/>
    <property type="match status" value="1"/>
</dbReference>
<dbReference type="PANTHER" id="PTHR21139">
    <property type="entry name" value="TRIOSEPHOSPHATE ISOMERASE"/>
    <property type="match status" value="1"/>
</dbReference>
<dbReference type="PANTHER" id="PTHR21139:SF42">
    <property type="entry name" value="TRIOSEPHOSPHATE ISOMERASE"/>
    <property type="match status" value="1"/>
</dbReference>
<dbReference type="Pfam" id="PF00121">
    <property type="entry name" value="TIM"/>
    <property type="match status" value="1"/>
</dbReference>
<dbReference type="SUPFAM" id="SSF51351">
    <property type="entry name" value="Triosephosphate isomerase (TIM)"/>
    <property type="match status" value="1"/>
</dbReference>
<dbReference type="PROSITE" id="PS00171">
    <property type="entry name" value="TIM_1"/>
    <property type="match status" value="1"/>
</dbReference>
<dbReference type="PROSITE" id="PS51440">
    <property type="entry name" value="TIM_2"/>
    <property type="match status" value="1"/>
</dbReference>
<accession>A5EK22</accession>
<gene>
    <name evidence="1" type="primary">tpiA</name>
    <name type="ordered locus">BBta_4480</name>
</gene>
<protein>
    <recommendedName>
        <fullName evidence="1">Triosephosphate isomerase</fullName>
        <shortName evidence="1">TIM</shortName>
        <shortName evidence="1">TPI</shortName>
        <ecNumber evidence="1">5.3.1.1</ecNumber>
    </recommendedName>
    <alternativeName>
        <fullName evidence="1">Triose-phosphate isomerase</fullName>
    </alternativeName>
</protein>
<evidence type="ECO:0000255" key="1">
    <source>
        <dbReference type="HAMAP-Rule" id="MF_00147"/>
    </source>
</evidence>
<proteinExistence type="inferred from homology"/>